<reference key="1">
    <citation type="journal article" date="2006" name="Nature">
        <title>Insights from the genome of the biotrophic fungal plant pathogen Ustilago maydis.</title>
        <authorList>
            <person name="Kaemper J."/>
            <person name="Kahmann R."/>
            <person name="Boelker M."/>
            <person name="Ma L.-J."/>
            <person name="Brefort T."/>
            <person name="Saville B.J."/>
            <person name="Banuett F."/>
            <person name="Kronstad J.W."/>
            <person name="Gold S.E."/>
            <person name="Mueller O."/>
            <person name="Perlin M.H."/>
            <person name="Woesten H.A.B."/>
            <person name="de Vries R."/>
            <person name="Ruiz-Herrera J."/>
            <person name="Reynaga-Pena C.G."/>
            <person name="Snetselaar K."/>
            <person name="McCann M."/>
            <person name="Perez-Martin J."/>
            <person name="Feldbruegge M."/>
            <person name="Basse C.W."/>
            <person name="Steinberg G."/>
            <person name="Ibeas J.I."/>
            <person name="Holloman W."/>
            <person name="Guzman P."/>
            <person name="Farman M.L."/>
            <person name="Stajich J.E."/>
            <person name="Sentandreu R."/>
            <person name="Gonzalez-Prieto J.M."/>
            <person name="Kennell J.C."/>
            <person name="Molina L."/>
            <person name="Schirawski J."/>
            <person name="Mendoza-Mendoza A."/>
            <person name="Greilinger D."/>
            <person name="Muench K."/>
            <person name="Roessel N."/>
            <person name="Scherer M."/>
            <person name="Vranes M."/>
            <person name="Ladendorf O."/>
            <person name="Vincon V."/>
            <person name="Fuchs U."/>
            <person name="Sandrock B."/>
            <person name="Meng S."/>
            <person name="Ho E.C.H."/>
            <person name="Cahill M.J."/>
            <person name="Boyce K.J."/>
            <person name="Klose J."/>
            <person name="Klosterman S.J."/>
            <person name="Deelstra H.J."/>
            <person name="Ortiz-Castellanos L."/>
            <person name="Li W."/>
            <person name="Sanchez-Alonso P."/>
            <person name="Schreier P.H."/>
            <person name="Haeuser-Hahn I."/>
            <person name="Vaupel M."/>
            <person name="Koopmann E."/>
            <person name="Friedrich G."/>
            <person name="Voss H."/>
            <person name="Schlueter T."/>
            <person name="Margolis J."/>
            <person name="Platt D."/>
            <person name="Swimmer C."/>
            <person name="Gnirke A."/>
            <person name="Chen F."/>
            <person name="Vysotskaia V."/>
            <person name="Mannhaupt G."/>
            <person name="Gueldener U."/>
            <person name="Muensterkoetter M."/>
            <person name="Haase D."/>
            <person name="Oesterheld M."/>
            <person name="Mewes H.-W."/>
            <person name="Mauceli E.W."/>
            <person name="DeCaprio D."/>
            <person name="Wade C.M."/>
            <person name="Butler J."/>
            <person name="Young S.K."/>
            <person name="Jaffe D.B."/>
            <person name="Calvo S.E."/>
            <person name="Nusbaum C."/>
            <person name="Galagan J.E."/>
            <person name="Birren B.W."/>
        </authorList>
    </citation>
    <scope>NUCLEOTIDE SEQUENCE [LARGE SCALE GENOMIC DNA]</scope>
    <source>
        <strain>DSM 14603 / FGSC 9021 / UM521</strain>
    </source>
</reference>
<reference key="2">
    <citation type="submission" date="2014-09" db="EMBL/GenBank/DDBJ databases">
        <authorList>
            <person name="Gueldener U."/>
            <person name="Muensterkoetter M."/>
            <person name="Walter M.C."/>
            <person name="Mannhaupt G."/>
            <person name="Kahmann R."/>
        </authorList>
    </citation>
    <scope>GENOME REANNOTATION</scope>
    <source>
        <strain>DSM 14603 / FGSC 9021 / UM521</strain>
    </source>
</reference>
<reference key="3">
    <citation type="journal article" date="2000" name="Fungal Genet. Biol.">
        <title>Induction of lytic enzymes by the interaction of Ustilago maydis with Zea mays tissues.</title>
        <authorList>
            <person name="Cano-Canchola C."/>
            <person name="Acevedo L."/>
            <person name="Ponce-Noyola P."/>
            <person name="Flores-Martinez A."/>
            <person name="Flores-Carreon A."/>
            <person name="Leal-Morales C.A."/>
        </authorList>
    </citation>
    <scope>INDUCTION</scope>
</reference>
<reference key="4">
    <citation type="journal article" date="2010" name="Phytopathology">
        <title>The snf1 gene of Ustilago maydis acts as a dual regulator of cell wall degrading enzymes.</title>
        <authorList>
            <person name="Nadal M."/>
            <person name="Garcia-Pedrajas M.D."/>
            <person name="Gold S.E."/>
        </authorList>
    </citation>
    <scope>INDUCTION</scope>
</reference>
<reference key="5">
    <citation type="journal article" date="2012" name="BMC Genomics">
        <title>Post-genomic analyses of fungal lignocellulosic biomass degradation reveal the unexpected potential of the plant pathogen Ustilago maydis.</title>
        <authorList>
            <person name="Couturier M."/>
            <person name="Navarro D."/>
            <person name="Olive C."/>
            <person name="Chevret D."/>
            <person name="Haon M."/>
            <person name="Favel A."/>
            <person name="Lesage-Meessen L."/>
            <person name="Henrissat B."/>
            <person name="Coutinho P.M."/>
            <person name="Berrin J.G."/>
        </authorList>
    </citation>
    <scope>SUBCELLULAR LOCATION</scope>
    <scope>IDENTIFICATION BY MASS SPECTROMETRY</scope>
</reference>
<reference key="6">
    <citation type="journal article" date="2013" name="BMC Biotechnol.">
        <title>Identification of an endo-1,4-beta-xylanase of Ustilago maydis.</title>
        <authorList>
            <person name="Geiser E."/>
            <person name="Wierckx N."/>
            <person name="Zimmermann M."/>
            <person name="Blank L.M."/>
        </authorList>
    </citation>
    <scope>SUBCELLULAR LOCATION</scope>
    <scope>IDENTIFICATION BY MASS SPECTROMETRY</scope>
    <scope>FUNCTION</scope>
    <scope>CATALYTIC ACTIVITY</scope>
    <scope>DISRUPTION PHENOTYPE</scope>
</reference>
<keyword id="KW-0119">Carbohydrate metabolism</keyword>
<keyword id="KW-0325">Glycoprotein</keyword>
<keyword id="KW-0326">Glycosidase</keyword>
<keyword id="KW-0378">Hydrolase</keyword>
<keyword id="KW-0624">Polysaccharide degradation</keyword>
<keyword id="KW-1185">Reference proteome</keyword>
<keyword id="KW-0964">Secreted</keyword>
<keyword id="KW-0732">Signal</keyword>
<keyword id="KW-0858">Xylan degradation</keyword>
<sequence>MKFATVLAFATAAGAAFASPLASSETTEAGQLSKRQSINYVQNYNGNAANFKYDQHAGTYSTRWTNPPDFVVGLGWSPGNSYRTIKFSGSYSSSSSSYSAVYGWLNNPLTEYYVVENYSYDPCSNSGAQVVGSVTSDGSNYKICKHTQYDQPSIQGTKTFGQYFSVRANKRNSGSVTLSKHFNAWKQHGFANGAANPDFNYQVFATEAFGGTGSASMSVSG</sequence>
<feature type="signal peptide" evidence="2">
    <location>
        <begin position="1"/>
        <end position="18"/>
    </location>
</feature>
<feature type="chain" id="PRO_0000429750" description="Endo-1,4-beta-xylanase 11A">
    <location>
        <begin position="19"/>
        <end position="221"/>
    </location>
</feature>
<feature type="domain" description="GH11" evidence="3">
    <location>
        <begin position="23"/>
        <end position="220"/>
    </location>
</feature>
<feature type="active site" description="Nucleophile" evidence="4">
    <location>
        <position position="111"/>
    </location>
</feature>
<feature type="active site" description="Proton donor" evidence="1">
    <location>
        <position position="207"/>
    </location>
</feature>
<feature type="glycosylation site" description="N-linked (GlcNAc...) asparagine" evidence="2">
    <location>
        <position position="117"/>
    </location>
</feature>
<accession>Q4P0L3</accession>
<accession>A0A0D1E285</accession>
<dbReference type="EC" id="3.2.1.8"/>
<dbReference type="EMBL" id="CM003143">
    <property type="protein sequence ID" value="KIS70264.1"/>
    <property type="molecule type" value="Genomic_DNA"/>
</dbReference>
<dbReference type="RefSeq" id="XP_011388331.1">
    <property type="nucleotide sequence ID" value="XM_011390029.1"/>
</dbReference>
<dbReference type="SMR" id="Q4P0L3"/>
<dbReference type="STRING" id="237631.Q4P0L3"/>
<dbReference type="GlyCosmos" id="Q4P0L3">
    <property type="glycosylation" value="1 site, No reported glycans"/>
</dbReference>
<dbReference type="EnsemblFungi" id="KIS70264">
    <property type="protein sequence ID" value="KIS70264"/>
    <property type="gene ID" value="UMAG_06350"/>
</dbReference>
<dbReference type="GeneID" id="23565964"/>
<dbReference type="KEGG" id="uma:UMAG_06350"/>
<dbReference type="VEuPathDB" id="FungiDB:UMAG_06350"/>
<dbReference type="eggNOG" id="ENOG502RXA7">
    <property type="taxonomic scope" value="Eukaryota"/>
</dbReference>
<dbReference type="HOGENOM" id="CLU_052631_3_2_1"/>
<dbReference type="InParanoid" id="Q4P0L3"/>
<dbReference type="OMA" id="ISTEGWG"/>
<dbReference type="OrthoDB" id="2115822at2759"/>
<dbReference type="BRENDA" id="3.2.1.8">
    <property type="organism ID" value="6587"/>
</dbReference>
<dbReference type="UniPathway" id="UPA00114"/>
<dbReference type="PHI-base" id="PHI:12060"/>
<dbReference type="Proteomes" id="UP000000561">
    <property type="component" value="Chromosome 4"/>
</dbReference>
<dbReference type="GO" id="GO:0005576">
    <property type="term" value="C:extracellular region"/>
    <property type="evidence" value="ECO:0007669"/>
    <property type="project" value="UniProtKB-SubCell"/>
</dbReference>
<dbReference type="GO" id="GO:0031176">
    <property type="term" value="F:endo-1,4-beta-xylanase activity"/>
    <property type="evidence" value="ECO:0007669"/>
    <property type="project" value="UniProtKB-EC"/>
</dbReference>
<dbReference type="GO" id="GO:0045493">
    <property type="term" value="P:xylan catabolic process"/>
    <property type="evidence" value="ECO:0000318"/>
    <property type="project" value="GO_Central"/>
</dbReference>
<dbReference type="FunFam" id="2.60.120.180:FF:000002">
    <property type="entry name" value="Endo-1,4-beta-xylanase A"/>
    <property type="match status" value="1"/>
</dbReference>
<dbReference type="Gene3D" id="2.60.120.180">
    <property type="match status" value="1"/>
</dbReference>
<dbReference type="InterPro" id="IPR013320">
    <property type="entry name" value="ConA-like_dom_sf"/>
</dbReference>
<dbReference type="InterPro" id="IPR013319">
    <property type="entry name" value="GH11/12"/>
</dbReference>
<dbReference type="InterPro" id="IPR018208">
    <property type="entry name" value="GH11_AS_1"/>
</dbReference>
<dbReference type="InterPro" id="IPR033123">
    <property type="entry name" value="GH11_dom"/>
</dbReference>
<dbReference type="InterPro" id="IPR001137">
    <property type="entry name" value="Glyco_hydro_11"/>
</dbReference>
<dbReference type="PANTHER" id="PTHR46828">
    <property type="entry name" value="ENDO-1,4-BETA-XYLANASE A-RELATED"/>
    <property type="match status" value="1"/>
</dbReference>
<dbReference type="PANTHER" id="PTHR46828:SF2">
    <property type="entry name" value="ENDO-1,4-BETA-XYLANASE A-RELATED"/>
    <property type="match status" value="1"/>
</dbReference>
<dbReference type="Pfam" id="PF00457">
    <property type="entry name" value="Glyco_hydro_11"/>
    <property type="match status" value="1"/>
</dbReference>
<dbReference type="PRINTS" id="PR00911">
    <property type="entry name" value="GLHYDRLASE11"/>
</dbReference>
<dbReference type="SUPFAM" id="SSF49899">
    <property type="entry name" value="Concanavalin A-like lectins/glucanases"/>
    <property type="match status" value="1"/>
</dbReference>
<dbReference type="PROSITE" id="PS00776">
    <property type="entry name" value="GH11_1"/>
    <property type="match status" value="1"/>
</dbReference>
<dbReference type="PROSITE" id="PS51761">
    <property type="entry name" value="GH11_3"/>
    <property type="match status" value="1"/>
</dbReference>
<comment type="function">
    <text evidence="8">Endo-1,4-beta-xylanase involved in the hydrolysis of xylan, a major structural heterogeneous polysaccharide found in plant biomass representing the second most abundant polysaccharide in the biosphere, after cellulose.</text>
</comment>
<comment type="catalytic activity">
    <reaction evidence="8">
        <text>Endohydrolysis of (1-&gt;4)-beta-D-xylosidic linkages in xylans.</text>
        <dbReference type="EC" id="3.2.1.8"/>
    </reaction>
</comment>
<comment type="pathway">
    <text>Glycan degradation; xylan degradation.</text>
</comment>
<comment type="subcellular location">
    <subcellularLocation>
        <location evidence="7 8">Secreted</location>
    </subcellularLocation>
</comment>
<comment type="induction">
    <text evidence="5 6">Induced in presence of Zea mays leaves and by xylan, and repressed by glucose. SNF1 acts as a positive regulator through the release of glucose repression.</text>
</comment>
<comment type="disruption phenotype">
    <text evidence="8">Reduces the rate of xylan degradation and growth on minimal medium with xylan.</text>
</comment>
<comment type="similarity">
    <text evidence="9">Belongs to the glycosyl hydrolase 11 (cellulase G) family.</text>
</comment>
<organism>
    <name type="scientific">Mycosarcoma maydis</name>
    <name type="common">Corn smut fungus</name>
    <name type="synonym">Ustilago maydis</name>
    <dbReference type="NCBI Taxonomy" id="5270"/>
    <lineage>
        <taxon>Eukaryota</taxon>
        <taxon>Fungi</taxon>
        <taxon>Dikarya</taxon>
        <taxon>Basidiomycota</taxon>
        <taxon>Ustilaginomycotina</taxon>
        <taxon>Ustilaginomycetes</taxon>
        <taxon>Ustilaginales</taxon>
        <taxon>Ustilaginaceae</taxon>
        <taxon>Mycosarcoma</taxon>
    </lineage>
</organism>
<evidence type="ECO:0000250" key="1"/>
<evidence type="ECO:0000255" key="2"/>
<evidence type="ECO:0000255" key="3">
    <source>
        <dbReference type="PROSITE-ProRule" id="PRU01097"/>
    </source>
</evidence>
<evidence type="ECO:0000255" key="4">
    <source>
        <dbReference type="PROSITE-ProRule" id="PRU10062"/>
    </source>
</evidence>
<evidence type="ECO:0000269" key="5">
    <source>
    </source>
</evidence>
<evidence type="ECO:0000269" key="6">
    <source>
    </source>
</evidence>
<evidence type="ECO:0000269" key="7">
    <source>
    </source>
</evidence>
<evidence type="ECO:0000269" key="8">
    <source>
    </source>
</evidence>
<evidence type="ECO:0000305" key="9"/>
<name>XY11A_MYCMD</name>
<proteinExistence type="evidence at protein level"/>
<protein>
    <recommendedName>
        <fullName>Endo-1,4-beta-xylanase 11A</fullName>
        <shortName>Xylanase 11A</shortName>
        <ecNumber>3.2.1.8</ecNumber>
    </recommendedName>
    <alternativeName>
        <fullName>1,4-beta-D-xylan xylanohydrolase 11A</fullName>
    </alternativeName>
</protein>
<gene>
    <name type="primary">XYN11A</name>
    <name type="ORF">UMAG_06350</name>
</gene>